<name>NAGA_RAT</name>
<reference key="1">
    <citation type="journal article" date="2004" name="Nature">
        <title>Genome sequence of the Brown Norway rat yields insights into mammalian evolution.</title>
        <authorList>
            <person name="Gibbs R.A."/>
            <person name="Weinstock G.M."/>
            <person name="Metzker M.L."/>
            <person name="Muzny D.M."/>
            <person name="Sodergren E.J."/>
            <person name="Scherer S."/>
            <person name="Scott G."/>
            <person name="Steffen D."/>
            <person name="Worley K.C."/>
            <person name="Burch P.E."/>
            <person name="Okwuonu G."/>
            <person name="Hines S."/>
            <person name="Lewis L."/>
            <person name="Deramo C."/>
            <person name="Delgado O."/>
            <person name="Dugan-Rocha S."/>
            <person name="Miner G."/>
            <person name="Morgan M."/>
            <person name="Hawes A."/>
            <person name="Gill R."/>
            <person name="Holt R.A."/>
            <person name="Adams M.D."/>
            <person name="Amanatides P.G."/>
            <person name="Baden-Tillson H."/>
            <person name="Barnstead M."/>
            <person name="Chin S."/>
            <person name="Evans C.A."/>
            <person name="Ferriera S."/>
            <person name="Fosler C."/>
            <person name="Glodek A."/>
            <person name="Gu Z."/>
            <person name="Jennings D."/>
            <person name="Kraft C.L."/>
            <person name="Nguyen T."/>
            <person name="Pfannkoch C.M."/>
            <person name="Sitter C."/>
            <person name="Sutton G.G."/>
            <person name="Venter J.C."/>
            <person name="Woodage T."/>
            <person name="Smith D."/>
            <person name="Lee H.-M."/>
            <person name="Gustafson E."/>
            <person name="Cahill P."/>
            <person name="Kana A."/>
            <person name="Doucette-Stamm L."/>
            <person name="Weinstock K."/>
            <person name="Fechtel K."/>
            <person name="Weiss R.B."/>
            <person name="Dunn D.M."/>
            <person name="Green E.D."/>
            <person name="Blakesley R.W."/>
            <person name="Bouffard G.G."/>
            <person name="De Jong P.J."/>
            <person name="Osoegawa K."/>
            <person name="Zhu B."/>
            <person name="Marra M."/>
            <person name="Schein J."/>
            <person name="Bosdet I."/>
            <person name="Fjell C."/>
            <person name="Jones S."/>
            <person name="Krzywinski M."/>
            <person name="Mathewson C."/>
            <person name="Siddiqui A."/>
            <person name="Wye N."/>
            <person name="McPherson J."/>
            <person name="Zhao S."/>
            <person name="Fraser C.M."/>
            <person name="Shetty J."/>
            <person name="Shatsman S."/>
            <person name="Geer K."/>
            <person name="Chen Y."/>
            <person name="Abramzon S."/>
            <person name="Nierman W.C."/>
            <person name="Havlak P.H."/>
            <person name="Chen R."/>
            <person name="Durbin K.J."/>
            <person name="Egan A."/>
            <person name="Ren Y."/>
            <person name="Song X.-Z."/>
            <person name="Li B."/>
            <person name="Liu Y."/>
            <person name="Qin X."/>
            <person name="Cawley S."/>
            <person name="Cooney A.J."/>
            <person name="D'Souza L.M."/>
            <person name="Martin K."/>
            <person name="Wu J.Q."/>
            <person name="Gonzalez-Garay M.L."/>
            <person name="Jackson A.R."/>
            <person name="Kalafus K.J."/>
            <person name="McLeod M.P."/>
            <person name="Milosavljevic A."/>
            <person name="Virk D."/>
            <person name="Volkov A."/>
            <person name="Wheeler D.A."/>
            <person name="Zhang Z."/>
            <person name="Bailey J.A."/>
            <person name="Eichler E.E."/>
            <person name="Tuzun E."/>
            <person name="Birney E."/>
            <person name="Mongin E."/>
            <person name="Ureta-Vidal A."/>
            <person name="Woodwark C."/>
            <person name="Zdobnov E."/>
            <person name="Bork P."/>
            <person name="Suyama M."/>
            <person name="Torrents D."/>
            <person name="Alexandersson M."/>
            <person name="Trask B.J."/>
            <person name="Young J.M."/>
            <person name="Huang H."/>
            <person name="Wang H."/>
            <person name="Xing H."/>
            <person name="Daniels S."/>
            <person name="Gietzen D."/>
            <person name="Schmidt J."/>
            <person name="Stevens K."/>
            <person name="Vitt U."/>
            <person name="Wingrove J."/>
            <person name="Camara F."/>
            <person name="Mar Alba M."/>
            <person name="Abril J.F."/>
            <person name="Guigo R."/>
            <person name="Smit A."/>
            <person name="Dubchak I."/>
            <person name="Rubin E.M."/>
            <person name="Couronne O."/>
            <person name="Poliakov A."/>
            <person name="Huebner N."/>
            <person name="Ganten D."/>
            <person name="Goesele C."/>
            <person name="Hummel O."/>
            <person name="Kreitler T."/>
            <person name="Lee Y.-A."/>
            <person name="Monti J."/>
            <person name="Schulz H."/>
            <person name="Zimdahl H."/>
            <person name="Himmelbauer H."/>
            <person name="Lehrach H."/>
            <person name="Jacob H.J."/>
            <person name="Bromberg S."/>
            <person name="Gullings-Handley J."/>
            <person name="Jensen-Seaman M.I."/>
            <person name="Kwitek A.E."/>
            <person name="Lazar J."/>
            <person name="Pasko D."/>
            <person name="Tonellato P.J."/>
            <person name="Twigger S."/>
            <person name="Ponting C.P."/>
            <person name="Duarte J.M."/>
            <person name="Rice S."/>
            <person name="Goodstadt L."/>
            <person name="Beatson S.A."/>
            <person name="Emes R.D."/>
            <person name="Winter E.E."/>
            <person name="Webber C."/>
            <person name="Brandt P."/>
            <person name="Nyakatura G."/>
            <person name="Adetobi M."/>
            <person name="Chiaromonte F."/>
            <person name="Elnitski L."/>
            <person name="Eswara P."/>
            <person name="Hardison R.C."/>
            <person name="Hou M."/>
            <person name="Kolbe D."/>
            <person name="Makova K."/>
            <person name="Miller W."/>
            <person name="Nekrutenko A."/>
            <person name="Riemer C."/>
            <person name="Schwartz S."/>
            <person name="Taylor J."/>
            <person name="Yang S."/>
            <person name="Zhang Y."/>
            <person name="Lindpaintner K."/>
            <person name="Andrews T.D."/>
            <person name="Caccamo M."/>
            <person name="Clamp M."/>
            <person name="Clarke L."/>
            <person name="Curwen V."/>
            <person name="Durbin R.M."/>
            <person name="Eyras E."/>
            <person name="Searle S.M."/>
            <person name="Cooper G.M."/>
            <person name="Batzoglou S."/>
            <person name="Brudno M."/>
            <person name="Sidow A."/>
            <person name="Stone E.A."/>
            <person name="Payseur B.A."/>
            <person name="Bourque G."/>
            <person name="Lopez-Otin C."/>
            <person name="Puente X.S."/>
            <person name="Chakrabarti K."/>
            <person name="Chatterji S."/>
            <person name="Dewey C."/>
            <person name="Pachter L."/>
            <person name="Bray N."/>
            <person name="Yap V.B."/>
            <person name="Caspi A."/>
            <person name="Tesler G."/>
            <person name="Pevzner P.A."/>
            <person name="Haussler D."/>
            <person name="Roskin K.M."/>
            <person name="Baertsch R."/>
            <person name="Clawson H."/>
            <person name="Furey T.S."/>
            <person name="Hinrichs A.S."/>
            <person name="Karolchik D."/>
            <person name="Kent W.J."/>
            <person name="Rosenbloom K.R."/>
            <person name="Trumbower H."/>
            <person name="Weirauch M."/>
            <person name="Cooper D.N."/>
            <person name="Stenson P.D."/>
            <person name="Ma B."/>
            <person name="Brent M."/>
            <person name="Arumugam M."/>
            <person name="Shteynberg D."/>
            <person name="Copley R.R."/>
            <person name="Taylor M.S."/>
            <person name="Riethman H."/>
            <person name="Mudunuri U."/>
            <person name="Peterson J."/>
            <person name="Guyer M."/>
            <person name="Felsenfeld A."/>
            <person name="Old S."/>
            <person name="Mockrin S."/>
            <person name="Collins F.S."/>
        </authorList>
    </citation>
    <scope>NUCLEOTIDE SEQUENCE [LARGE SCALE GENOMIC DNA]</scope>
    <source>
        <strain>Brown Norway</strain>
    </source>
</reference>
<evidence type="ECO:0000250" key="1">
    <source>
        <dbReference type="UniProtKB" id="P0AF18"/>
    </source>
</evidence>
<evidence type="ECO:0000250" key="2">
    <source>
        <dbReference type="UniProtKB" id="Q9Y303"/>
    </source>
</evidence>
<evidence type="ECO:0000305" key="3"/>
<dbReference type="EC" id="3.5.1.25" evidence="2"/>
<dbReference type="EMBL" id="AABR03073424">
    <property type="status" value="NOT_ANNOTATED_CDS"/>
    <property type="molecule type" value="Genomic_DNA"/>
</dbReference>
<dbReference type="RefSeq" id="NP_001020161.2">
    <property type="nucleotide sequence ID" value="NM_001024990.2"/>
</dbReference>
<dbReference type="SMR" id="Q5BJY6"/>
<dbReference type="FunCoup" id="Q5BJY6">
    <property type="interactions" value="469"/>
</dbReference>
<dbReference type="STRING" id="10116.ENSRNOP00000008537"/>
<dbReference type="PhosphoSitePlus" id="Q5BJY6"/>
<dbReference type="jPOST" id="Q5BJY6"/>
<dbReference type="PaxDb" id="10116-ENSRNOP00000008537"/>
<dbReference type="GeneID" id="302972"/>
<dbReference type="KEGG" id="rno:302972"/>
<dbReference type="UCSC" id="RGD:1304601">
    <property type="organism name" value="rat"/>
</dbReference>
<dbReference type="AGR" id="RGD:1304601"/>
<dbReference type="CTD" id="51005"/>
<dbReference type="RGD" id="1304601">
    <property type="gene designation" value="Amdhd2"/>
</dbReference>
<dbReference type="VEuPathDB" id="HostDB:ENSRNOG00000006460"/>
<dbReference type="eggNOG" id="KOG3892">
    <property type="taxonomic scope" value="Eukaryota"/>
</dbReference>
<dbReference type="HOGENOM" id="CLU_032482_0_2_1"/>
<dbReference type="InParanoid" id="Q5BJY6"/>
<dbReference type="OrthoDB" id="13343at9989"/>
<dbReference type="PhylomeDB" id="Q5BJY6"/>
<dbReference type="TreeFam" id="TF315036"/>
<dbReference type="Reactome" id="R-RNO-446210">
    <property type="pathway name" value="Synthesis of UDP-N-acetyl-glucosamine"/>
</dbReference>
<dbReference type="SABIO-RK" id="Q5BJY6"/>
<dbReference type="UniPathway" id="UPA00629"/>
<dbReference type="PRO" id="PR:Q5BJY6"/>
<dbReference type="Proteomes" id="UP000002494">
    <property type="component" value="Chromosome 10"/>
</dbReference>
<dbReference type="Bgee" id="ENSRNOG00000006460">
    <property type="expression patterns" value="Expressed in jejunum and 18 other cell types or tissues"/>
</dbReference>
<dbReference type="GO" id="GO:0046872">
    <property type="term" value="F:metal ion binding"/>
    <property type="evidence" value="ECO:0007669"/>
    <property type="project" value="UniProtKB-KW"/>
</dbReference>
<dbReference type="GO" id="GO:0008448">
    <property type="term" value="F:N-acetylglucosamine-6-phosphate deacetylase activity"/>
    <property type="evidence" value="ECO:0000250"/>
    <property type="project" value="UniProtKB"/>
</dbReference>
<dbReference type="GO" id="GO:0006046">
    <property type="term" value="P:N-acetylglucosamine catabolic process"/>
    <property type="evidence" value="ECO:0000318"/>
    <property type="project" value="GO_Central"/>
</dbReference>
<dbReference type="GO" id="GO:0019262">
    <property type="term" value="P:N-acetylneuraminate catabolic process"/>
    <property type="evidence" value="ECO:0007669"/>
    <property type="project" value="UniProtKB-UniPathway"/>
</dbReference>
<dbReference type="GO" id="GO:0106279">
    <property type="term" value="P:negative regulation of UDP-N-acetylglucosamine biosynthetic process"/>
    <property type="evidence" value="ECO:0000266"/>
    <property type="project" value="RGD"/>
</dbReference>
<dbReference type="CDD" id="cd00854">
    <property type="entry name" value="NagA"/>
    <property type="match status" value="1"/>
</dbReference>
<dbReference type="FunFam" id="3.20.20.140:FF:000023">
    <property type="entry name" value="N-acetylglucosamine-6-phosphate deacetylase"/>
    <property type="match status" value="1"/>
</dbReference>
<dbReference type="Gene3D" id="3.20.20.140">
    <property type="entry name" value="Metal-dependent hydrolases"/>
    <property type="match status" value="1"/>
</dbReference>
<dbReference type="Gene3D" id="2.30.40.10">
    <property type="entry name" value="Urease, subunit C, domain 1"/>
    <property type="match status" value="1"/>
</dbReference>
<dbReference type="InterPro" id="IPR006680">
    <property type="entry name" value="Amidohydro-rel"/>
</dbReference>
<dbReference type="InterPro" id="IPR003764">
    <property type="entry name" value="GlcNAc_6-P_deAcase"/>
</dbReference>
<dbReference type="InterPro" id="IPR011059">
    <property type="entry name" value="Metal-dep_hydrolase_composite"/>
</dbReference>
<dbReference type="InterPro" id="IPR032466">
    <property type="entry name" value="Metal_Hydrolase"/>
</dbReference>
<dbReference type="NCBIfam" id="TIGR00221">
    <property type="entry name" value="nagA"/>
    <property type="match status" value="1"/>
</dbReference>
<dbReference type="PANTHER" id="PTHR11113">
    <property type="entry name" value="N-ACETYLGLUCOSAMINE-6-PHOSPHATE DEACETYLASE"/>
    <property type="match status" value="1"/>
</dbReference>
<dbReference type="PANTHER" id="PTHR11113:SF14">
    <property type="entry name" value="N-ACETYLGLUCOSAMINE-6-PHOSPHATE DEACETYLASE"/>
    <property type="match status" value="1"/>
</dbReference>
<dbReference type="Pfam" id="PF01979">
    <property type="entry name" value="Amidohydro_1"/>
    <property type="match status" value="1"/>
</dbReference>
<dbReference type="PIRSF" id="PIRSF038994">
    <property type="entry name" value="NagA"/>
    <property type="match status" value="1"/>
</dbReference>
<dbReference type="SUPFAM" id="SSF51338">
    <property type="entry name" value="Composite domain of metallo-dependent hydrolases"/>
    <property type="match status" value="1"/>
</dbReference>
<dbReference type="SUPFAM" id="SSF51556">
    <property type="entry name" value="Metallo-dependent hydrolases"/>
    <property type="match status" value="1"/>
</dbReference>
<comment type="function">
    <text evidence="2">Hydrolyzes the N-glycolyl group from N-glycolylglucosamine 6-phosphate (GlcNGc-6-P) in the N-glycolylneuraminic acid (Neu5Gc) degradation pathway.</text>
</comment>
<comment type="catalytic activity">
    <reaction evidence="2">
        <text>N-acetyl-D-glucosamine 6-phosphate + H2O = D-glucosamine 6-phosphate + acetate</text>
        <dbReference type="Rhea" id="RHEA:22936"/>
        <dbReference type="ChEBI" id="CHEBI:15377"/>
        <dbReference type="ChEBI" id="CHEBI:30089"/>
        <dbReference type="ChEBI" id="CHEBI:57513"/>
        <dbReference type="ChEBI" id="CHEBI:58725"/>
        <dbReference type="EC" id="3.5.1.25"/>
    </reaction>
</comment>
<comment type="cofactor">
    <cofactor evidence="1">
        <name>a divalent metal cation</name>
        <dbReference type="ChEBI" id="CHEBI:60240"/>
    </cofactor>
    <text evidence="1">Binds 1 divalent metal cation per subunit.</text>
</comment>
<comment type="pathway">
    <text evidence="2">Amino-sugar metabolism; N-acetylneuraminate degradation.</text>
</comment>
<comment type="similarity">
    <text evidence="3">Belongs to the metallo-dependent hydrolases superfamily. NagA family.</text>
</comment>
<protein>
    <recommendedName>
        <fullName evidence="2">N-acetylglucosamine-6-phosphate deacetylase</fullName>
        <shortName evidence="2">GlcNAc 6-P deacetylase</shortName>
        <ecNumber evidence="2">3.5.1.25</ecNumber>
    </recommendedName>
    <alternativeName>
        <fullName evidence="2">Amidohydrolase domain-containing protein 2</fullName>
    </alternativeName>
</protein>
<sequence length="409" mass="43539">MRSGQSAALAPVLQFTNCRILRGGTLLREDLWVRGGRILDPEKLFFEERRVADEQRDCGGRILAPGFIDVQINGGFGVDFSRATEDVGSGVALVARRLLSHGVTSFCPTLVTSPPEVYHKVLPQIPVKSGGPHGAGVLGVHLEGPFISREKRGAHPEAYLRSFGANAFHDVLATYGPLDNVCIVTLAPELDRSHEVIQALTAKGIRVSLGHSVADLRAAEVAVQSGATFITHLFNAMLPFHHRDPGIVGLLTSDQLPPGHCIFYGMIADGIHTNPAALRIAHRAHPQGLVLVTDAVPALGLGNGRHTLGQQEVEVDGLIAYIAGTKTLSGSIAPMDVCIRHFLQATGCSVESALEAASLHPAQLLGLEKTKGSLDFGADADFVVLDDTLHVQATYISGELVWQAEEAGL</sequence>
<feature type="chain" id="PRO_0000315778" description="N-acetylglucosamine-6-phosphate deacetylase">
    <location>
        <begin position="1"/>
        <end position="409"/>
    </location>
</feature>
<feature type="active site" description="Proton donor/acceptor" evidence="1">
    <location>
        <position position="294"/>
    </location>
</feature>
<feature type="binding site" evidence="1">
    <location>
        <position position="143"/>
    </location>
    <ligand>
        <name>a divalent metal cation</name>
        <dbReference type="ChEBI" id="CHEBI:60240"/>
    </ligand>
</feature>
<feature type="binding site" evidence="1">
    <location>
        <begin position="154"/>
        <end position="155"/>
    </location>
    <ligand>
        <name>substrate</name>
    </ligand>
</feature>
<feature type="binding site" evidence="1">
    <location>
        <position position="211"/>
    </location>
    <ligand>
        <name>a divalent metal cation</name>
        <dbReference type="ChEBI" id="CHEBI:60240"/>
    </ligand>
</feature>
<feature type="binding site" evidence="1">
    <location>
        <position position="232"/>
    </location>
    <ligand>
        <name>a divalent metal cation</name>
        <dbReference type="ChEBI" id="CHEBI:60240"/>
    </ligand>
</feature>
<feature type="binding site" evidence="1">
    <location>
        <begin position="235"/>
        <end position="236"/>
    </location>
    <ligand>
        <name>substrate</name>
    </ligand>
</feature>
<feature type="binding site" evidence="1">
    <location>
        <position position="243"/>
    </location>
    <ligand>
        <name>substrate</name>
    </ligand>
</feature>
<feature type="binding site" evidence="1">
    <location>
        <begin position="269"/>
        <end position="272"/>
    </location>
    <ligand>
        <name>substrate</name>
    </ligand>
</feature>
<feature type="binding site" evidence="1">
    <location>
        <begin position="328"/>
        <end position="330"/>
    </location>
    <ligand>
        <name>substrate</name>
    </ligand>
</feature>
<keyword id="KW-0119">Carbohydrate metabolism</keyword>
<keyword id="KW-0378">Hydrolase</keyword>
<keyword id="KW-0479">Metal-binding</keyword>
<keyword id="KW-1185">Reference proteome</keyword>
<proteinExistence type="inferred from homology"/>
<organism>
    <name type="scientific">Rattus norvegicus</name>
    <name type="common">Rat</name>
    <dbReference type="NCBI Taxonomy" id="10116"/>
    <lineage>
        <taxon>Eukaryota</taxon>
        <taxon>Metazoa</taxon>
        <taxon>Chordata</taxon>
        <taxon>Craniata</taxon>
        <taxon>Vertebrata</taxon>
        <taxon>Euteleostomi</taxon>
        <taxon>Mammalia</taxon>
        <taxon>Eutheria</taxon>
        <taxon>Euarchontoglires</taxon>
        <taxon>Glires</taxon>
        <taxon>Rodentia</taxon>
        <taxon>Myomorpha</taxon>
        <taxon>Muroidea</taxon>
        <taxon>Muridae</taxon>
        <taxon>Murinae</taxon>
        <taxon>Rattus</taxon>
    </lineage>
</organism>
<gene>
    <name type="primary">Amdhd2</name>
</gene>
<accession>Q5BJY6</accession>